<gene>
    <name evidence="1" type="primary">rpsI</name>
    <name type="ordered locus">lp_1078</name>
</gene>
<organism>
    <name type="scientific">Lactiplantibacillus plantarum (strain ATCC BAA-793 / NCIMB 8826 / WCFS1)</name>
    <name type="common">Lactobacillus plantarum</name>
    <dbReference type="NCBI Taxonomy" id="220668"/>
    <lineage>
        <taxon>Bacteria</taxon>
        <taxon>Bacillati</taxon>
        <taxon>Bacillota</taxon>
        <taxon>Bacilli</taxon>
        <taxon>Lactobacillales</taxon>
        <taxon>Lactobacillaceae</taxon>
        <taxon>Lactiplantibacillus</taxon>
    </lineage>
</organism>
<evidence type="ECO:0000255" key="1">
    <source>
        <dbReference type="HAMAP-Rule" id="MF_00532"/>
    </source>
</evidence>
<evidence type="ECO:0000256" key="2">
    <source>
        <dbReference type="SAM" id="MobiDB-lite"/>
    </source>
</evidence>
<evidence type="ECO:0000305" key="3"/>
<dbReference type="EMBL" id="AL935263">
    <property type="protein sequence ID" value="CCC78484.1"/>
    <property type="molecule type" value="Genomic_DNA"/>
</dbReference>
<dbReference type="RefSeq" id="WP_003638099.1">
    <property type="nucleotide sequence ID" value="NC_004567.2"/>
</dbReference>
<dbReference type="RefSeq" id="YP_004888998.1">
    <property type="nucleotide sequence ID" value="NC_004567.2"/>
</dbReference>
<dbReference type="SMR" id="Q88XU7"/>
<dbReference type="STRING" id="220668.lp_1078"/>
<dbReference type="EnsemblBacteria" id="CCC78484">
    <property type="protein sequence ID" value="CCC78484"/>
    <property type="gene ID" value="lp_1078"/>
</dbReference>
<dbReference type="GeneID" id="89668586"/>
<dbReference type="KEGG" id="lpl:lp_1078"/>
<dbReference type="PATRIC" id="fig|220668.9.peg.913"/>
<dbReference type="eggNOG" id="COG0103">
    <property type="taxonomic scope" value="Bacteria"/>
</dbReference>
<dbReference type="HOGENOM" id="CLU_046483_2_1_9"/>
<dbReference type="OrthoDB" id="9803965at2"/>
<dbReference type="PhylomeDB" id="Q88XU7"/>
<dbReference type="Proteomes" id="UP000000432">
    <property type="component" value="Chromosome"/>
</dbReference>
<dbReference type="GO" id="GO:0022627">
    <property type="term" value="C:cytosolic small ribosomal subunit"/>
    <property type="evidence" value="ECO:0007669"/>
    <property type="project" value="TreeGrafter"/>
</dbReference>
<dbReference type="GO" id="GO:0003723">
    <property type="term" value="F:RNA binding"/>
    <property type="evidence" value="ECO:0007669"/>
    <property type="project" value="TreeGrafter"/>
</dbReference>
<dbReference type="GO" id="GO:0003735">
    <property type="term" value="F:structural constituent of ribosome"/>
    <property type="evidence" value="ECO:0007669"/>
    <property type="project" value="InterPro"/>
</dbReference>
<dbReference type="GO" id="GO:0006412">
    <property type="term" value="P:translation"/>
    <property type="evidence" value="ECO:0007669"/>
    <property type="project" value="UniProtKB-UniRule"/>
</dbReference>
<dbReference type="FunFam" id="3.30.230.10:FF:000001">
    <property type="entry name" value="30S ribosomal protein S9"/>
    <property type="match status" value="1"/>
</dbReference>
<dbReference type="Gene3D" id="3.30.230.10">
    <property type="match status" value="1"/>
</dbReference>
<dbReference type="HAMAP" id="MF_00532_B">
    <property type="entry name" value="Ribosomal_uS9_B"/>
    <property type="match status" value="1"/>
</dbReference>
<dbReference type="InterPro" id="IPR020568">
    <property type="entry name" value="Ribosomal_Su5_D2-typ_SF"/>
</dbReference>
<dbReference type="InterPro" id="IPR000754">
    <property type="entry name" value="Ribosomal_uS9"/>
</dbReference>
<dbReference type="InterPro" id="IPR023035">
    <property type="entry name" value="Ribosomal_uS9_bac/plastid"/>
</dbReference>
<dbReference type="InterPro" id="IPR020574">
    <property type="entry name" value="Ribosomal_uS9_CS"/>
</dbReference>
<dbReference type="InterPro" id="IPR014721">
    <property type="entry name" value="Ribsml_uS5_D2-typ_fold_subgr"/>
</dbReference>
<dbReference type="NCBIfam" id="NF001099">
    <property type="entry name" value="PRK00132.1"/>
    <property type="match status" value="1"/>
</dbReference>
<dbReference type="PANTHER" id="PTHR21569">
    <property type="entry name" value="RIBOSOMAL PROTEIN S9"/>
    <property type="match status" value="1"/>
</dbReference>
<dbReference type="PANTHER" id="PTHR21569:SF1">
    <property type="entry name" value="SMALL RIBOSOMAL SUBUNIT PROTEIN US9M"/>
    <property type="match status" value="1"/>
</dbReference>
<dbReference type="Pfam" id="PF00380">
    <property type="entry name" value="Ribosomal_S9"/>
    <property type="match status" value="1"/>
</dbReference>
<dbReference type="SUPFAM" id="SSF54211">
    <property type="entry name" value="Ribosomal protein S5 domain 2-like"/>
    <property type="match status" value="1"/>
</dbReference>
<dbReference type="PROSITE" id="PS00360">
    <property type="entry name" value="RIBOSOMAL_S9"/>
    <property type="match status" value="1"/>
</dbReference>
<keyword id="KW-1185">Reference proteome</keyword>
<keyword id="KW-0687">Ribonucleoprotein</keyword>
<keyword id="KW-0689">Ribosomal protein</keyword>
<name>RS9_LACPL</name>
<comment type="similarity">
    <text evidence="1">Belongs to the universal ribosomal protein uS9 family.</text>
</comment>
<sequence length="130" mass="14595">MAQVQYRGTGRRKDSVARVRLVPGTGKIVMNDKSVEDYIPFADIRKELLQPFEVTETTDQYDVLVNVNGGGFHGQAGATRHGIARALLEVDPDFRTPLKRAGLLTRDARMKERKKPGLKKARKASQFSKR</sequence>
<reference key="1">
    <citation type="journal article" date="2003" name="Proc. Natl. Acad. Sci. U.S.A.">
        <title>Complete genome sequence of Lactobacillus plantarum WCFS1.</title>
        <authorList>
            <person name="Kleerebezem M."/>
            <person name="Boekhorst J."/>
            <person name="van Kranenburg R."/>
            <person name="Molenaar D."/>
            <person name="Kuipers O.P."/>
            <person name="Leer R."/>
            <person name="Tarchini R."/>
            <person name="Peters S.A."/>
            <person name="Sandbrink H.M."/>
            <person name="Fiers M.W.E.J."/>
            <person name="Stiekema W."/>
            <person name="Klein Lankhorst R.M."/>
            <person name="Bron P.A."/>
            <person name="Hoffer S.M."/>
            <person name="Nierop Groot M.N."/>
            <person name="Kerkhoven R."/>
            <person name="De Vries M."/>
            <person name="Ursing B."/>
            <person name="De Vos W.M."/>
            <person name="Siezen R.J."/>
        </authorList>
    </citation>
    <scope>NUCLEOTIDE SEQUENCE [LARGE SCALE GENOMIC DNA]</scope>
    <source>
        <strain>ATCC BAA-793 / NCIMB 8826 / WCFS1</strain>
    </source>
</reference>
<reference key="2">
    <citation type="journal article" date="2012" name="J. Bacteriol.">
        <title>Complete resequencing and reannotation of the Lactobacillus plantarum WCFS1 genome.</title>
        <authorList>
            <person name="Siezen R.J."/>
            <person name="Francke C."/>
            <person name="Renckens B."/>
            <person name="Boekhorst J."/>
            <person name="Wels M."/>
            <person name="Kleerebezem M."/>
            <person name="van Hijum S.A."/>
        </authorList>
    </citation>
    <scope>NUCLEOTIDE SEQUENCE [LARGE SCALE GENOMIC DNA]</scope>
    <scope>GENOME REANNOTATION</scope>
    <source>
        <strain>ATCC BAA-793 / NCIMB 8826 / WCFS1</strain>
    </source>
</reference>
<accession>Q88XU7</accession>
<accession>F9UMP5</accession>
<feature type="chain" id="PRO_0000111367" description="Small ribosomal subunit protein uS9">
    <location>
        <begin position="1"/>
        <end position="130"/>
    </location>
</feature>
<feature type="region of interest" description="Disordered" evidence="2">
    <location>
        <begin position="105"/>
        <end position="130"/>
    </location>
</feature>
<feature type="compositionally biased region" description="Basic residues" evidence="2">
    <location>
        <begin position="111"/>
        <end position="130"/>
    </location>
</feature>
<proteinExistence type="inferred from homology"/>
<protein>
    <recommendedName>
        <fullName evidence="1">Small ribosomal subunit protein uS9</fullName>
    </recommendedName>
    <alternativeName>
        <fullName evidence="3">30S ribosomal protein S9</fullName>
    </alternativeName>
</protein>